<feature type="chain" id="PRO_0000040634" description="Non-structural protein P8">
    <location>
        <begin position="1"/>
        <end position="229"/>
    </location>
</feature>
<feature type="chain" id="PRO_0000040635" description="Non-structural protein NS3A">
    <location>
        <begin position="14"/>
        <end position="229"/>
    </location>
</feature>
<feature type="transmembrane region" description="Helical" evidence="2">
    <location>
        <begin position="119"/>
        <end position="139"/>
    </location>
</feature>
<feature type="transmembrane region" description="Helical" evidence="2">
    <location>
        <begin position="162"/>
        <end position="182"/>
    </location>
</feature>
<organism>
    <name type="scientific">Bluetongue virus 17 (isolate USA)</name>
    <name type="common">BTV 17</name>
    <dbReference type="NCBI Taxonomy" id="33718"/>
    <lineage>
        <taxon>Viruses</taxon>
        <taxon>Riboviria</taxon>
        <taxon>Orthornavirae</taxon>
        <taxon>Duplornaviricota</taxon>
        <taxon>Resentoviricetes</taxon>
        <taxon>Reovirales</taxon>
        <taxon>Sedoreoviridae</taxon>
        <taxon>Orbivirus</taxon>
        <taxon>Bluetongue virus</taxon>
    </lineage>
</organism>
<proteinExistence type="inferred from homology"/>
<organismHost>
    <name type="scientific">Antilocapra americana</name>
    <name type="common">Pronghorn</name>
    <dbReference type="NCBI Taxonomy" id="9891"/>
</organismHost>
<organismHost>
    <name type="scientific">Bos taurus</name>
    <name type="common">Bovine</name>
    <dbReference type="NCBI Taxonomy" id="9913"/>
</organismHost>
<organismHost>
    <name type="scientific">Capra hircus</name>
    <name type="common">Goat</name>
    <dbReference type="NCBI Taxonomy" id="9925"/>
</organismHost>
<organismHost>
    <name type="scientific">Culicoides variipennis</name>
    <name type="common">Biting midge</name>
    <dbReference type="NCBI Taxonomy" id="46212"/>
</organismHost>
<organismHost>
    <name type="scientific">Ovis aries</name>
    <name type="common">Sheep</name>
    <dbReference type="NCBI Taxonomy" id="9940"/>
</organismHost>
<gene>
    <name type="primary">Segment-10</name>
</gene>
<dbReference type="EMBL" id="L08630">
    <property type="protein sequence ID" value="AAA42837.1"/>
    <property type="molecule type" value="Genomic_RNA"/>
</dbReference>
<dbReference type="GO" id="GO:0044177">
    <property type="term" value="C:host cell Golgi apparatus"/>
    <property type="evidence" value="ECO:0007669"/>
    <property type="project" value="UniProtKB-SubCell"/>
</dbReference>
<dbReference type="GO" id="GO:0020002">
    <property type="term" value="C:host cell plasma membrane"/>
    <property type="evidence" value="ECO:0007669"/>
    <property type="project" value="UniProtKB-SubCell"/>
</dbReference>
<dbReference type="GO" id="GO:0016020">
    <property type="term" value="C:membrane"/>
    <property type="evidence" value="ECO:0007669"/>
    <property type="project" value="UniProtKB-KW"/>
</dbReference>
<dbReference type="GO" id="GO:0052170">
    <property type="term" value="P:symbiont-mediated suppression of host innate immune response"/>
    <property type="evidence" value="ECO:0007669"/>
    <property type="project" value="UniProtKB-KW"/>
</dbReference>
<dbReference type="InterPro" id="IPR002565">
    <property type="entry name" value="Orbi_NS3"/>
</dbReference>
<dbReference type="Pfam" id="PF01616">
    <property type="entry name" value="Orbi_NS3"/>
    <property type="match status" value="1"/>
</dbReference>
<name>VP8_BTV17</name>
<protein>
    <recommendedName>
        <fullName>Non-structural protein P8</fullName>
    </recommendedName>
    <alternativeName>
        <fullName>Non-structural protein NS3</fullName>
    </alternativeName>
    <component>
        <recommendedName>
            <fullName>Non-structural protein NS3A</fullName>
        </recommendedName>
    </component>
</protein>
<keyword id="KW-1032">Host cell membrane</keyword>
<keyword id="KW-1040">Host Golgi apparatus</keyword>
<keyword id="KW-1043">Host membrane</keyword>
<keyword id="KW-0945">Host-virus interaction</keyword>
<keyword id="KW-1090">Inhibition of host innate immune response by virus</keyword>
<keyword id="KW-0472">Membrane</keyword>
<keyword id="KW-0812">Transmembrane</keyword>
<keyword id="KW-1133">Transmembrane helix</keyword>
<keyword id="KW-0899">Viral immunoevasion</keyword>
<comment type="function">
    <text evidence="1">Plays a role in the inhibition of host innate immune response. Interacts with host OPTN and thus inhibits the recruitment of TBK1 to the host Golgi apparatus. In turn, downstream partner IRF3 cannot be activated and IFN-beta production is impaired.</text>
</comment>
<comment type="function">
    <text evidence="1">Facilitates viral particle release either by increasing plasma membrane permeability through a viroporin-like activity or by viral budding.</text>
</comment>
<comment type="subunit">
    <text evidence="1">Forms homooligomers via coiled-coil motif. Interacts with host OPTN; this interaction inhibits innate immune response.</text>
</comment>
<comment type="subcellular location">
    <subcellularLocation>
        <location evidence="1">Host cell membrane</location>
        <topology evidence="2">Multi-pass membrane protein</topology>
    </subcellularLocation>
    <subcellularLocation>
        <location evidence="1">Host Golgi apparatus</location>
    </subcellularLocation>
</comment>
<comment type="similarity">
    <text evidence="3">Belongs to the orbivirus NS3 family.</text>
</comment>
<sequence>MLSGLIQRFEEEKMKHNQERVEELSLVRVDDTISQPPRYAPSAPMPSSMPTVALEILDKAMSNTTGATQTQKAEKAAFASYAEAFRDDVRLRQIKRHVNEQISPKLKSDLGGLKKKRAIIHMTLLIAAVVALLTSVCTLSSDMSVAFKLNGTSAEIPQWFKSLNPMLGVVNLGATFLMMVCAKSERSLNQQIDMIKKEVMKKQSYNDAVRMSFTEFSSVPLDGFELPLT</sequence>
<reference key="1">
    <citation type="journal article" date="1992" name="Virus Res.">
        <title>Sequence conservation among the cognate nonstructural NS3/3A protein genes of six bluetongue viruses.</title>
        <authorList>
            <person name="Hwang G.-Y."/>
            <person name="Yang Y.-Y."/>
            <person name="Chiou J.-F."/>
            <person name="Li J.K.-K."/>
        </authorList>
    </citation>
    <scope>NUCLEOTIDE SEQUENCE [GENOMIC RNA]</scope>
</reference>
<accession>Q04686</accession>
<evidence type="ECO:0000250" key="1">
    <source>
        <dbReference type="UniProtKB" id="P08363"/>
    </source>
</evidence>
<evidence type="ECO:0000255" key="2"/>
<evidence type="ECO:0000305" key="3"/>